<gene>
    <name type="ORF">AGAP001654</name>
</gene>
<organism>
    <name type="scientific">Anopheles gambiae</name>
    <name type="common">African malaria mosquito</name>
    <dbReference type="NCBI Taxonomy" id="7165"/>
    <lineage>
        <taxon>Eukaryota</taxon>
        <taxon>Metazoa</taxon>
        <taxon>Ecdysozoa</taxon>
        <taxon>Arthropoda</taxon>
        <taxon>Hexapoda</taxon>
        <taxon>Insecta</taxon>
        <taxon>Pterygota</taxon>
        <taxon>Neoptera</taxon>
        <taxon>Endopterygota</taxon>
        <taxon>Diptera</taxon>
        <taxon>Nematocera</taxon>
        <taxon>Culicoidea</taxon>
        <taxon>Culicidae</taxon>
        <taxon>Anophelinae</taxon>
        <taxon>Anopheles</taxon>
    </lineage>
</organism>
<dbReference type="EMBL" id="AAAB01008987">
    <property type="protein sequence ID" value="EAA00919.4"/>
    <property type="molecule type" value="Genomic_DNA"/>
</dbReference>
<dbReference type="SMR" id="Q7PXY4"/>
<dbReference type="FunCoup" id="Q7PXY4">
    <property type="interactions" value="819"/>
</dbReference>
<dbReference type="STRING" id="7165.Q7PXY4"/>
<dbReference type="PaxDb" id="7165-AGAP001654-PA"/>
<dbReference type="EnsemblMetazoa" id="AGAP001654-RA">
    <property type="protein sequence ID" value="AGAP001654-PA"/>
    <property type="gene ID" value="AGAP001654"/>
</dbReference>
<dbReference type="GeneID" id="1281519"/>
<dbReference type="KEGG" id="aga:1281519"/>
<dbReference type="CTD" id="8819"/>
<dbReference type="VEuPathDB" id="VectorBase:AGAMI1_014803"/>
<dbReference type="VEuPathDB" id="VectorBase:AGAP001654"/>
<dbReference type="eggNOG" id="ENOG502QWFH">
    <property type="taxonomic scope" value="Eukaryota"/>
</dbReference>
<dbReference type="HOGENOM" id="CLU_097961_1_0_1"/>
<dbReference type="InParanoid" id="Q7PXY4"/>
<dbReference type="OMA" id="SDQICCL"/>
<dbReference type="PhylomeDB" id="Q7PXY4"/>
<dbReference type="Proteomes" id="UP000007062">
    <property type="component" value="Chromosome 2R"/>
</dbReference>
<dbReference type="GO" id="GO:0000118">
    <property type="term" value="C:histone deacetylase complex"/>
    <property type="evidence" value="ECO:0000318"/>
    <property type="project" value="GO_Central"/>
</dbReference>
<dbReference type="GO" id="GO:0003677">
    <property type="term" value="F:DNA binding"/>
    <property type="evidence" value="ECO:0007669"/>
    <property type="project" value="UniProtKB-KW"/>
</dbReference>
<dbReference type="GO" id="GO:0003712">
    <property type="term" value="F:transcription coregulator activity"/>
    <property type="evidence" value="ECO:0000318"/>
    <property type="project" value="GO_Central"/>
</dbReference>
<dbReference type="GO" id="GO:0008270">
    <property type="term" value="F:zinc ion binding"/>
    <property type="evidence" value="ECO:0007669"/>
    <property type="project" value="UniProtKB-KW"/>
</dbReference>
<dbReference type="GO" id="GO:0006355">
    <property type="term" value="P:regulation of DNA-templated transcription"/>
    <property type="evidence" value="ECO:0000318"/>
    <property type="project" value="GO_Central"/>
</dbReference>
<dbReference type="FunFam" id="3.40.1800.30:FF:000001">
    <property type="entry name" value="Histone deacetylase complex subunit"/>
    <property type="match status" value="1"/>
</dbReference>
<dbReference type="Gene3D" id="3.40.1800.30">
    <property type="match status" value="1"/>
</dbReference>
<dbReference type="Gene3D" id="6.10.160.20">
    <property type="match status" value="1"/>
</dbReference>
<dbReference type="InterPro" id="IPR024145">
    <property type="entry name" value="His_deAcase_SAP30/SAP30L"/>
</dbReference>
<dbReference type="InterPro" id="IPR038291">
    <property type="entry name" value="SAP30_C_sf"/>
</dbReference>
<dbReference type="InterPro" id="IPR025718">
    <property type="entry name" value="SAP30_Sin3-bd"/>
</dbReference>
<dbReference type="InterPro" id="IPR025717">
    <property type="entry name" value="SAP30_zn-finger"/>
</dbReference>
<dbReference type="PANTHER" id="PTHR13286:SF6">
    <property type="entry name" value="HISTONE DEACETYLASE COMPLEX SUBUNIT SAP30L-RELATED"/>
    <property type="match status" value="1"/>
</dbReference>
<dbReference type="PANTHER" id="PTHR13286">
    <property type="entry name" value="SAP30"/>
    <property type="match status" value="1"/>
</dbReference>
<dbReference type="Pfam" id="PF13867">
    <property type="entry name" value="SAP30_Sin3_bdg"/>
    <property type="match status" value="1"/>
</dbReference>
<dbReference type="Pfam" id="PF13866">
    <property type="entry name" value="zf-SAP30"/>
    <property type="match status" value="1"/>
</dbReference>
<name>SAP30_ANOGA</name>
<sequence length="174" mass="20276">MMNNNGFSTGEEDSRGPADQICCLLDDGERCRKQAGNASYSKRIQKTVTQRRLKLSIDSHARHIYICDFHKARIQCARTKRRRRDSEDDSNETDTDLPEVDLYQLQVNTLRRYKRFYKVSTRPSSNKAQLSETIMKHFKTIPIKEKEILTYFIYMVKSNSNKLDQKNNASAEAT</sequence>
<reference key="1">
    <citation type="journal article" date="2002" name="Science">
        <title>The genome sequence of the malaria mosquito Anopheles gambiae.</title>
        <authorList>
            <person name="Holt R.A."/>
            <person name="Subramanian G.M."/>
            <person name="Halpern A."/>
            <person name="Sutton G.G."/>
            <person name="Charlab R."/>
            <person name="Nusskern D.R."/>
            <person name="Wincker P."/>
            <person name="Clark A.G."/>
            <person name="Ribeiro J.M.C."/>
            <person name="Wides R."/>
            <person name="Salzberg S.L."/>
            <person name="Loftus B.J."/>
            <person name="Yandell M.D."/>
            <person name="Majoros W.H."/>
            <person name="Rusch D.B."/>
            <person name="Lai Z."/>
            <person name="Kraft C.L."/>
            <person name="Abril J.F."/>
            <person name="Anthouard V."/>
            <person name="Arensburger P."/>
            <person name="Atkinson P.W."/>
            <person name="Baden H."/>
            <person name="de Berardinis V."/>
            <person name="Baldwin D."/>
            <person name="Benes V."/>
            <person name="Biedler J."/>
            <person name="Blass C."/>
            <person name="Bolanos R."/>
            <person name="Boscus D."/>
            <person name="Barnstead M."/>
            <person name="Cai S."/>
            <person name="Center A."/>
            <person name="Chaturverdi K."/>
            <person name="Christophides G.K."/>
            <person name="Chrystal M.A.M."/>
            <person name="Clamp M."/>
            <person name="Cravchik A."/>
            <person name="Curwen V."/>
            <person name="Dana A."/>
            <person name="Delcher A."/>
            <person name="Dew I."/>
            <person name="Evans C.A."/>
            <person name="Flanigan M."/>
            <person name="Grundschober-Freimoser A."/>
            <person name="Friedli L."/>
            <person name="Gu Z."/>
            <person name="Guan P."/>
            <person name="Guigo R."/>
            <person name="Hillenmeyer M.E."/>
            <person name="Hladun S.L."/>
            <person name="Hogan J.R."/>
            <person name="Hong Y.S."/>
            <person name="Hoover J."/>
            <person name="Jaillon O."/>
            <person name="Ke Z."/>
            <person name="Kodira C.D."/>
            <person name="Kokoza E."/>
            <person name="Koutsos A."/>
            <person name="Letunic I."/>
            <person name="Levitsky A.A."/>
            <person name="Liang Y."/>
            <person name="Lin J.-J."/>
            <person name="Lobo N.F."/>
            <person name="Lopez J.R."/>
            <person name="Malek J.A."/>
            <person name="McIntosh T.C."/>
            <person name="Meister S."/>
            <person name="Miller J.R."/>
            <person name="Mobarry C."/>
            <person name="Mongin E."/>
            <person name="Murphy S.D."/>
            <person name="O'Brochta D.A."/>
            <person name="Pfannkoch C."/>
            <person name="Qi R."/>
            <person name="Regier M.A."/>
            <person name="Remington K."/>
            <person name="Shao H."/>
            <person name="Sharakhova M.V."/>
            <person name="Sitter C.D."/>
            <person name="Shetty J."/>
            <person name="Smith T.J."/>
            <person name="Strong R."/>
            <person name="Sun J."/>
            <person name="Thomasova D."/>
            <person name="Ton L.Q."/>
            <person name="Topalis P."/>
            <person name="Tu Z.J."/>
            <person name="Unger M.F."/>
            <person name="Walenz B."/>
            <person name="Wang A.H."/>
            <person name="Wang J."/>
            <person name="Wang M."/>
            <person name="Wang X."/>
            <person name="Woodford K.J."/>
            <person name="Wortman J.R."/>
            <person name="Wu M."/>
            <person name="Yao A."/>
            <person name="Zdobnov E.M."/>
            <person name="Zhang H."/>
            <person name="Zhao Q."/>
            <person name="Zhao S."/>
            <person name="Zhu S.C."/>
            <person name="Zhimulev I."/>
            <person name="Coluzzi M."/>
            <person name="della Torre A."/>
            <person name="Roth C.W."/>
            <person name="Louis C."/>
            <person name="Kalush F."/>
            <person name="Mural R.J."/>
            <person name="Myers E.W."/>
            <person name="Adams M.D."/>
            <person name="Smith H.O."/>
            <person name="Broder S."/>
            <person name="Gardner M.J."/>
            <person name="Fraser C.M."/>
            <person name="Birney E."/>
            <person name="Bork P."/>
            <person name="Brey P.T."/>
            <person name="Venter J.C."/>
            <person name="Weissenbach J."/>
            <person name="Kafatos F.C."/>
            <person name="Collins F.H."/>
            <person name="Hoffman S.L."/>
        </authorList>
    </citation>
    <scope>NUCLEOTIDE SEQUENCE [LARGE SCALE GENOMIC DNA]</scope>
    <source>
        <strain>PEST</strain>
    </source>
</reference>
<evidence type="ECO:0000250" key="1"/>
<evidence type="ECO:0000305" key="2"/>
<proteinExistence type="inferred from homology"/>
<protein>
    <recommendedName>
        <fullName>Histone deacetylase complex subunit SAP30 homolog</fullName>
    </recommendedName>
</protein>
<feature type="chain" id="PRO_0000309507" description="Histone deacetylase complex subunit SAP30 homolog">
    <location>
        <begin position="1"/>
        <end position="174"/>
    </location>
</feature>
<feature type="zinc finger region" description="Atypical">
    <location>
        <begin position="22"/>
        <end position="70"/>
    </location>
</feature>
<accession>Q7PXY4</accession>
<comment type="function">
    <text evidence="1">Required for the function of the class 1 Sin3-histone deacetylase complex (HDAC).</text>
</comment>
<comment type="subunit">
    <text evidence="1">Component of the class 1 Sin3-histone deacetylase complex (HDAC).</text>
</comment>
<comment type="subcellular location">
    <subcellularLocation>
        <location evidence="1">Nucleus</location>
    </subcellularLocation>
</comment>
<comment type="similarity">
    <text evidence="2">Belongs to the SAP30 family.</text>
</comment>
<keyword id="KW-0238">DNA-binding</keyword>
<keyword id="KW-0479">Metal-binding</keyword>
<keyword id="KW-0539">Nucleus</keyword>
<keyword id="KW-1185">Reference proteome</keyword>
<keyword id="KW-0678">Repressor</keyword>
<keyword id="KW-0804">Transcription</keyword>
<keyword id="KW-0805">Transcription regulation</keyword>
<keyword id="KW-0862">Zinc</keyword>
<keyword id="KW-0863">Zinc-finger</keyword>